<accession>A8EZE8</accession>
<sequence>MINLGDKQSIIVVAMSGGVDSAAVAAMLHAQGYNVIGITLQLYDHGMAVGKKNACCAGQDIYDAKMVANKLGIPHYVLDYESKFKESVIENFVDSYLQGETPLPCVQCNKSVKFKDLIKTAKELGAAQLATGHYVRKINGDNGAELHIGIDPAKDQSYFLFTTTKEQLDYLSFPLGWFTKDETRKLASKFGLEVANKPDSQDICFVPDGNYKNVINKIRPGSSKKGKIIHVNGFELGEHSGIINYTIGQRRGLGIAYNEPLYVIKIDPNNNIVYVGPESALNMQEFIIKDVNWLADEIKDNEKLEVAVKIRSTRLPSLAEISKLGDDKMKVKFLSEEKAVAPGQACVIYDGERVLGGGWITRDIIITL</sequence>
<evidence type="ECO:0000255" key="1">
    <source>
        <dbReference type="HAMAP-Rule" id="MF_00144"/>
    </source>
</evidence>
<comment type="function">
    <text evidence="1">Catalyzes the 2-thiolation of uridine at the wobble position (U34) of tRNA, leading to the formation of s(2)U34.</text>
</comment>
<comment type="catalytic activity">
    <reaction evidence="1">
        <text>S-sulfanyl-L-cysteinyl-[protein] + uridine(34) in tRNA + AH2 + ATP = 2-thiouridine(34) in tRNA + L-cysteinyl-[protein] + A + AMP + diphosphate + H(+)</text>
        <dbReference type="Rhea" id="RHEA:47032"/>
        <dbReference type="Rhea" id="RHEA-COMP:10131"/>
        <dbReference type="Rhea" id="RHEA-COMP:11726"/>
        <dbReference type="Rhea" id="RHEA-COMP:11727"/>
        <dbReference type="Rhea" id="RHEA-COMP:11728"/>
        <dbReference type="ChEBI" id="CHEBI:13193"/>
        <dbReference type="ChEBI" id="CHEBI:15378"/>
        <dbReference type="ChEBI" id="CHEBI:17499"/>
        <dbReference type="ChEBI" id="CHEBI:29950"/>
        <dbReference type="ChEBI" id="CHEBI:30616"/>
        <dbReference type="ChEBI" id="CHEBI:33019"/>
        <dbReference type="ChEBI" id="CHEBI:61963"/>
        <dbReference type="ChEBI" id="CHEBI:65315"/>
        <dbReference type="ChEBI" id="CHEBI:87170"/>
        <dbReference type="ChEBI" id="CHEBI:456215"/>
        <dbReference type="EC" id="2.8.1.13"/>
    </reaction>
</comment>
<comment type="subcellular location">
    <subcellularLocation>
        <location evidence="1">Cytoplasm</location>
    </subcellularLocation>
</comment>
<comment type="similarity">
    <text evidence="1">Belongs to the MnmA/TRMU family.</text>
</comment>
<proteinExistence type="inferred from homology"/>
<organism>
    <name type="scientific">Rickettsia canadensis (strain McKiel)</name>
    <dbReference type="NCBI Taxonomy" id="293613"/>
    <lineage>
        <taxon>Bacteria</taxon>
        <taxon>Pseudomonadati</taxon>
        <taxon>Pseudomonadota</taxon>
        <taxon>Alphaproteobacteria</taxon>
        <taxon>Rickettsiales</taxon>
        <taxon>Rickettsiaceae</taxon>
        <taxon>Rickettsieae</taxon>
        <taxon>Rickettsia</taxon>
        <taxon>belli group</taxon>
    </lineage>
</organism>
<protein>
    <recommendedName>
        <fullName evidence="1">tRNA-specific 2-thiouridylase MnmA</fullName>
        <ecNumber evidence="1">2.8.1.13</ecNumber>
    </recommendedName>
</protein>
<keyword id="KW-0067">ATP-binding</keyword>
<keyword id="KW-0963">Cytoplasm</keyword>
<keyword id="KW-1015">Disulfide bond</keyword>
<keyword id="KW-0547">Nucleotide-binding</keyword>
<keyword id="KW-0694">RNA-binding</keyword>
<keyword id="KW-0808">Transferase</keyword>
<keyword id="KW-0819">tRNA processing</keyword>
<keyword id="KW-0820">tRNA-binding</keyword>
<gene>
    <name evidence="1" type="primary">mnmA</name>
    <name type="synonym">trmU</name>
    <name type="ordered locus">A1E_04020</name>
</gene>
<reference key="1">
    <citation type="submission" date="2007-09" db="EMBL/GenBank/DDBJ databases">
        <title>Complete genome sequence of Rickettsia canadensis.</title>
        <authorList>
            <person name="Madan A."/>
            <person name="Fahey J."/>
            <person name="Helton E."/>
            <person name="Ketteman M."/>
            <person name="Madan A."/>
            <person name="Rodrigues S."/>
            <person name="Sanchez A."/>
            <person name="Whiting M."/>
            <person name="Dasch G."/>
            <person name="Eremeeva M."/>
        </authorList>
    </citation>
    <scope>NUCLEOTIDE SEQUENCE [LARGE SCALE GENOMIC DNA]</scope>
    <source>
        <strain>McKiel</strain>
    </source>
</reference>
<name>MNMA_RICCK</name>
<dbReference type="EC" id="2.8.1.13" evidence="1"/>
<dbReference type="EMBL" id="CP000409">
    <property type="protein sequence ID" value="ABV73731.1"/>
    <property type="molecule type" value="Genomic_DNA"/>
</dbReference>
<dbReference type="RefSeq" id="WP_012148926.1">
    <property type="nucleotide sequence ID" value="NC_009879.1"/>
</dbReference>
<dbReference type="SMR" id="A8EZE8"/>
<dbReference type="STRING" id="293613.A1E_04020"/>
<dbReference type="KEGG" id="rcm:A1E_04020"/>
<dbReference type="eggNOG" id="COG0482">
    <property type="taxonomic scope" value="Bacteria"/>
</dbReference>
<dbReference type="HOGENOM" id="CLU_035188_0_0_5"/>
<dbReference type="Proteomes" id="UP000007056">
    <property type="component" value="Chromosome"/>
</dbReference>
<dbReference type="GO" id="GO:0005737">
    <property type="term" value="C:cytoplasm"/>
    <property type="evidence" value="ECO:0007669"/>
    <property type="project" value="UniProtKB-SubCell"/>
</dbReference>
<dbReference type="GO" id="GO:0005524">
    <property type="term" value="F:ATP binding"/>
    <property type="evidence" value="ECO:0007669"/>
    <property type="project" value="UniProtKB-KW"/>
</dbReference>
<dbReference type="GO" id="GO:0000049">
    <property type="term" value="F:tRNA binding"/>
    <property type="evidence" value="ECO:0007669"/>
    <property type="project" value="UniProtKB-KW"/>
</dbReference>
<dbReference type="GO" id="GO:0103016">
    <property type="term" value="F:tRNA-uridine 2-sulfurtransferase activity"/>
    <property type="evidence" value="ECO:0007669"/>
    <property type="project" value="UniProtKB-EC"/>
</dbReference>
<dbReference type="GO" id="GO:0002143">
    <property type="term" value="P:tRNA wobble position uridine thiolation"/>
    <property type="evidence" value="ECO:0007669"/>
    <property type="project" value="TreeGrafter"/>
</dbReference>
<dbReference type="CDD" id="cd01998">
    <property type="entry name" value="MnmA_TRMU-like"/>
    <property type="match status" value="1"/>
</dbReference>
<dbReference type="FunFam" id="2.30.30.280:FF:000001">
    <property type="entry name" value="tRNA-specific 2-thiouridylase MnmA"/>
    <property type="match status" value="1"/>
</dbReference>
<dbReference type="FunFam" id="2.40.30.10:FF:000127">
    <property type="entry name" value="tRNA-specific 2-thiouridylase MnmA"/>
    <property type="match status" value="1"/>
</dbReference>
<dbReference type="FunFam" id="3.40.50.620:FF:000115">
    <property type="entry name" value="tRNA-specific 2-thiouridylase MnmA"/>
    <property type="match status" value="1"/>
</dbReference>
<dbReference type="Gene3D" id="2.30.30.280">
    <property type="entry name" value="Adenine nucleotide alpha hydrolases-like domains"/>
    <property type="match status" value="1"/>
</dbReference>
<dbReference type="Gene3D" id="3.40.50.620">
    <property type="entry name" value="HUPs"/>
    <property type="match status" value="1"/>
</dbReference>
<dbReference type="Gene3D" id="2.40.30.10">
    <property type="entry name" value="Translation factors"/>
    <property type="match status" value="1"/>
</dbReference>
<dbReference type="HAMAP" id="MF_00144">
    <property type="entry name" value="tRNA_thiouridyl_MnmA"/>
    <property type="match status" value="1"/>
</dbReference>
<dbReference type="InterPro" id="IPR004506">
    <property type="entry name" value="MnmA-like"/>
</dbReference>
<dbReference type="InterPro" id="IPR046885">
    <property type="entry name" value="MnmA-like_C"/>
</dbReference>
<dbReference type="InterPro" id="IPR046884">
    <property type="entry name" value="MnmA-like_central"/>
</dbReference>
<dbReference type="InterPro" id="IPR023382">
    <property type="entry name" value="MnmA-like_central_sf"/>
</dbReference>
<dbReference type="InterPro" id="IPR014729">
    <property type="entry name" value="Rossmann-like_a/b/a_fold"/>
</dbReference>
<dbReference type="NCBIfam" id="NF001138">
    <property type="entry name" value="PRK00143.1"/>
    <property type="match status" value="1"/>
</dbReference>
<dbReference type="NCBIfam" id="TIGR00420">
    <property type="entry name" value="trmU"/>
    <property type="match status" value="1"/>
</dbReference>
<dbReference type="PANTHER" id="PTHR11933:SF5">
    <property type="entry name" value="MITOCHONDRIAL TRNA-SPECIFIC 2-THIOURIDYLASE 1"/>
    <property type="match status" value="1"/>
</dbReference>
<dbReference type="PANTHER" id="PTHR11933">
    <property type="entry name" value="TRNA 5-METHYLAMINOMETHYL-2-THIOURIDYLATE -METHYLTRANSFERASE"/>
    <property type="match status" value="1"/>
</dbReference>
<dbReference type="Pfam" id="PF03054">
    <property type="entry name" value="tRNA_Me_trans"/>
    <property type="match status" value="1"/>
</dbReference>
<dbReference type="Pfam" id="PF20258">
    <property type="entry name" value="tRNA_Me_trans_C"/>
    <property type="match status" value="1"/>
</dbReference>
<dbReference type="Pfam" id="PF20259">
    <property type="entry name" value="tRNA_Me_trans_M"/>
    <property type="match status" value="1"/>
</dbReference>
<dbReference type="SUPFAM" id="SSF52402">
    <property type="entry name" value="Adenine nucleotide alpha hydrolases-like"/>
    <property type="match status" value="1"/>
</dbReference>
<feature type="chain" id="PRO_1000009566" description="tRNA-specific 2-thiouridylase MnmA">
    <location>
        <begin position="1"/>
        <end position="368"/>
    </location>
</feature>
<feature type="region of interest" description="Interaction with tRNA" evidence="1">
    <location>
        <begin position="154"/>
        <end position="156"/>
    </location>
</feature>
<feature type="active site" description="Nucleophile" evidence="1">
    <location>
        <position position="108"/>
    </location>
</feature>
<feature type="active site" description="Cysteine persulfide intermediate" evidence="1">
    <location>
        <position position="204"/>
    </location>
</feature>
<feature type="binding site" evidence="1">
    <location>
        <begin position="14"/>
        <end position="21"/>
    </location>
    <ligand>
        <name>ATP</name>
        <dbReference type="ChEBI" id="CHEBI:30616"/>
    </ligand>
</feature>
<feature type="binding site" evidence="1">
    <location>
        <position position="40"/>
    </location>
    <ligand>
        <name>ATP</name>
        <dbReference type="ChEBI" id="CHEBI:30616"/>
    </ligand>
</feature>
<feature type="binding site" evidence="1">
    <location>
        <position position="132"/>
    </location>
    <ligand>
        <name>ATP</name>
        <dbReference type="ChEBI" id="CHEBI:30616"/>
    </ligand>
</feature>
<feature type="site" description="Interaction with tRNA" evidence="1">
    <location>
        <position position="133"/>
    </location>
</feature>
<feature type="site" description="Interaction with tRNA" evidence="1">
    <location>
        <position position="344"/>
    </location>
</feature>
<feature type="disulfide bond" description="Alternate" evidence="1">
    <location>
        <begin position="108"/>
        <end position="204"/>
    </location>
</feature>